<reference key="1">
    <citation type="journal article" date="1998" name="Plant Mol. Biol.">
        <title>A chalcone synthase with an unusual substrate preference is expressed in barley leaves in response to UV light and pathogen attack.</title>
        <authorList>
            <person name="Christensen A.B."/>
            <person name="Gregersen P.L."/>
            <person name="Schroeder J."/>
            <person name="Collinge D.B."/>
        </authorList>
    </citation>
    <scope>NUCLEOTIDE SEQUENCE [MRNA]</scope>
    <source>
        <strain>cv. Pallas / P-02</strain>
        <tissue>Leaf</tissue>
    </source>
</reference>
<gene>
    <name type="primary">CHS2</name>
</gene>
<protein>
    <recommendedName>
        <fullName>Chalcone synthase 2</fullName>
        <ecNumber>2.3.1.74</ecNumber>
    </recommendedName>
    <alternativeName>
        <fullName>Naringenin-chalcone synthase 2</fullName>
    </alternativeName>
</protein>
<proteinExistence type="evidence at protein level"/>
<name>CHS2_HORVU</name>
<accession>Q96562</accession>
<evidence type="ECO:0000255" key="1">
    <source>
        <dbReference type="PROSITE-ProRule" id="PRU10023"/>
    </source>
</evidence>
<evidence type="ECO:0000305" key="2"/>
<evidence type="ECO:0007829" key="3">
    <source>
        <dbReference type="PDB" id="8B32"/>
    </source>
</evidence>
<evidence type="ECO:0007829" key="4">
    <source>
        <dbReference type="PDB" id="8B35"/>
    </source>
</evidence>
<keyword id="KW-0002">3D-structure</keyword>
<keyword id="KW-0012">Acyltransferase</keyword>
<keyword id="KW-0284">Flavonoid biosynthesis</keyword>
<keyword id="KW-0808">Transferase</keyword>
<sequence>MAAVRLKEVRMAQRAEGLATVLAIGTAVPANCVYQATYPDYYFRVTKSEHLADLKEKFQRMCDKSMIRKRHMHLTEEILIKNPKICAHMETSLDARHAIALVEVPKLGQGAAEKAIKEWGQPLSKITHLVFCTTSGVDMPGADYQLTKLLGLSPTVKRLMMYQQGCFGGATVLRLAKDIAENNRGARVLVVCSEITAMAFRGPCKSHLDSLVGHALFGDGAAAAIIGADPDQLDEQPVFQLVSASQTILPESEGAIDGHLTEAGLTIHLLKDVPGLISENIEQALEDAFEPLGIHNWNSIFWIAHPGGPAILDRVEDRVGLDKKRMRASREVLSEYGNMSSASVLFVLDVMRKSSAKDGLATTGEGKDWGVLFGFGPGLTVETLVLHSVPVPVPTAASA</sequence>
<dbReference type="EC" id="2.3.1.74"/>
<dbReference type="EMBL" id="Y09233">
    <property type="protein sequence ID" value="CAA70435.1"/>
    <property type="molecule type" value="mRNA"/>
</dbReference>
<dbReference type="PIR" id="T04485">
    <property type="entry name" value="T04485"/>
</dbReference>
<dbReference type="PDB" id="8B32">
    <property type="method" value="X-ray"/>
    <property type="resolution" value="1.70 A"/>
    <property type="chains" value="A/B=1-399"/>
</dbReference>
<dbReference type="PDB" id="8B35">
    <property type="method" value="X-ray"/>
    <property type="resolution" value="2.00 A"/>
    <property type="chains" value="A/B=1-399"/>
</dbReference>
<dbReference type="PDB" id="8B3C">
    <property type="method" value="X-ray"/>
    <property type="resolution" value="2.00 A"/>
    <property type="chains" value="A/B=1-399"/>
</dbReference>
<dbReference type="PDBsum" id="8B32"/>
<dbReference type="PDBsum" id="8B35"/>
<dbReference type="PDBsum" id="8B3C"/>
<dbReference type="SMR" id="Q96562"/>
<dbReference type="UniPathway" id="UPA00154"/>
<dbReference type="ExpressionAtlas" id="Q96562">
    <property type="expression patterns" value="differential"/>
</dbReference>
<dbReference type="GO" id="GO:0016210">
    <property type="term" value="F:naringenin-chalcone synthase activity"/>
    <property type="evidence" value="ECO:0007669"/>
    <property type="project" value="UniProtKB-EC"/>
</dbReference>
<dbReference type="GO" id="GO:0009813">
    <property type="term" value="P:flavonoid biosynthetic process"/>
    <property type="evidence" value="ECO:0007669"/>
    <property type="project" value="UniProtKB-UniPathway"/>
</dbReference>
<dbReference type="GO" id="GO:0030639">
    <property type="term" value="P:polyketide biosynthetic process"/>
    <property type="evidence" value="ECO:0007669"/>
    <property type="project" value="TreeGrafter"/>
</dbReference>
<dbReference type="CDD" id="cd00831">
    <property type="entry name" value="CHS_like"/>
    <property type="match status" value="1"/>
</dbReference>
<dbReference type="FunFam" id="3.40.47.10:FF:000014">
    <property type="entry name" value="Chalcone synthase 1"/>
    <property type="match status" value="1"/>
</dbReference>
<dbReference type="FunFam" id="3.40.47.10:FF:000025">
    <property type="entry name" value="Chalcone synthase 2"/>
    <property type="match status" value="1"/>
</dbReference>
<dbReference type="Gene3D" id="3.40.47.10">
    <property type="match status" value="2"/>
</dbReference>
<dbReference type="InterPro" id="IPR012328">
    <property type="entry name" value="Chalcone/stilbene_synt_C"/>
</dbReference>
<dbReference type="InterPro" id="IPR001099">
    <property type="entry name" value="Chalcone/stilbene_synt_N"/>
</dbReference>
<dbReference type="InterPro" id="IPR018088">
    <property type="entry name" value="Chalcone/stilbene_synthase_AS"/>
</dbReference>
<dbReference type="InterPro" id="IPR011141">
    <property type="entry name" value="Polyketide_synthase_type-III"/>
</dbReference>
<dbReference type="InterPro" id="IPR016039">
    <property type="entry name" value="Thiolase-like"/>
</dbReference>
<dbReference type="PANTHER" id="PTHR11877:SF73">
    <property type="entry name" value="CHALCONE SYNTHASE"/>
    <property type="match status" value="1"/>
</dbReference>
<dbReference type="PANTHER" id="PTHR11877">
    <property type="entry name" value="HYDROXYMETHYLGLUTARYL-COA SYNTHASE"/>
    <property type="match status" value="1"/>
</dbReference>
<dbReference type="Pfam" id="PF02797">
    <property type="entry name" value="Chal_sti_synt_C"/>
    <property type="match status" value="1"/>
</dbReference>
<dbReference type="Pfam" id="PF00195">
    <property type="entry name" value="Chal_sti_synt_N"/>
    <property type="match status" value="1"/>
</dbReference>
<dbReference type="PIRSF" id="PIRSF000451">
    <property type="entry name" value="PKS_III"/>
    <property type="match status" value="1"/>
</dbReference>
<dbReference type="SUPFAM" id="SSF53901">
    <property type="entry name" value="Thiolase-like"/>
    <property type="match status" value="2"/>
</dbReference>
<dbReference type="PROSITE" id="PS00441">
    <property type="entry name" value="CHALCONE_SYNTH"/>
    <property type="match status" value="1"/>
</dbReference>
<organism>
    <name type="scientific">Hordeum vulgare</name>
    <name type="common">Barley</name>
    <dbReference type="NCBI Taxonomy" id="4513"/>
    <lineage>
        <taxon>Eukaryota</taxon>
        <taxon>Viridiplantae</taxon>
        <taxon>Streptophyta</taxon>
        <taxon>Embryophyta</taxon>
        <taxon>Tracheophyta</taxon>
        <taxon>Spermatophyta</taxon>
        <taxon>Magnoliopsida</taxon>
        <taxon>Liliopsida</taxon>
        <taxon>Poales</taxon>
        <taxon>Poaceae</taxon>
        <taxon>BOP clade</taxon>
        <taxon>Pooideae</taxon>
        <taxon>Triticodae</taxon>
        <taxon>Triticeae</taxon>
        <taxon>Hordeinae</taxon>
        <taxon>Hordeum</taxon>
    </lineage>
</organism>
<feature type="chain" id="PRO_0000215980" description="Chalcone synthase 2">
    <location>
        <begin position="1"/>
        <end position="399"/>
    </location>
</feature>
<feature type="active site" evidence="1">
    <location>
        <position position="166"/>
    </location>
</feature>
<feature type="turn" evidence="3">
    <location>
        <begin position="11"/>
        <end position="13"/>
    </location>
</feature>
<feature type="strand" evidence="3">
    <location>
        <begin position="20"/>
        <end position="27"/>
    </location>
</feature>
<feature type="strand" evidence="3">
    <location>
        <begin position="32"/>
        <end position="35"/>
    </location>
</feature>
<feature type="helix" evidence="3">
    <location>
        <begin position="38"/>
        <end position="45"/>
    </location>
</feature>
<feature type="helix" evidence="3">
    <location>
        <begin position="52"/>
        <end position="63"/>
    </location>
</feature>
<feature type="strand" evidence="3">
    <location>
        <begin position="69"/>
        <end position="71"/>
    </location>
</feature>
<feature type="helix" evidence="3">
    <location>
        <begin position="76"/>
        <end position="81"/>
    </location>
</feature>
<feature type="helix" evidence="3">
    <location>
        <begin position="83"/>
        <end position="86"/>
    </location>
</feature>
<feature type="strand" evidence="3">
    <location>
        <begin position="87"/>
        <end position="89"/>
    </location>
</feature>
<feature type="helix" evidence="3">
    <location>
        <begin position="93"/>
        <end position="119"/>
    </location>
</feature>
<feature type="helix" evidence="3">
    <location>
        <begin position="123"/>
        <end position="125"/>
    </location>
</feature>
<feature type="strand" evidence="3">
    <location>
        <begin position="128"/>
        <end position="132"/>
    </location>
</feature>
<feature type="strand" evidence="3">
    <location>
        <begin position="138"/>
        <end position="140"/>
    </location>
</feature>
<feature type="helix" evidence="3">
    <location>
        <begin position="142"/>
        <end position="150"/>
    </location>
</feature>
<feature type="strand" evidence="3">
    <location>
        <begin position="157"/>
        <end position="161"/>
    </location>
</feature>
<feature type="helix" evidence="3">
    <location>
        <begin position="168"/>
        <end position="182"/>
    </location>
</feature>
<feature type="strand" evidence="3">
    <location>
        <begin position="187"/>
        <end position="194"/>
    </location>
</feature>
<feature type="helix" evidence="3">
    <location>
        <begin position="196"/>
        <end position="198"/>
    </location>
</feature>
<feature type="helix" evidence="3">
    <location>
        <begin position="208"/>
        <end position="216"/>
    </location>
</feature>
<feature type="strand" evidence="3">
    <location>
        <begin position="220"/>
        <end position="229"/>
    </location>
</feature>
<feature type="turn" evidence="3">
    <location>
        <begin position="232"/>
        <end position="234"/>
    </location>
</feature>
<feature type="strand" evidence="3">
    <location>
        <begin position="239"/>
        <end position="248"/>
    </location>
</feature>
<feature type="strand" evidence="3">
    <location>
        <begin position="255"/>
        <end position="261"/>
    </location>
</feature>
<feature type="strand" evidence="3">
    <location>
        <begin position="264"/>
        <end position="269"/>
    </location>
</feature>
<feature type="helix" evidence="3">
    <location>
        <begin position="273"/>
        <end position="289"/>
    </location>
</feature>
<feature type="helix" evidence="3">
    <location>
        <begin position="290"/>
        <end position="292"/>
    </location>
</feature>
<feature type="strand" evidence="3">
    <location>
        <begin position="299"/>
        <end position="304"/>
    </location>
</feature>
<feature type="helix" evidence="3">
    <location>
        <begin position="309"/>
        <end position="319"/>
    </location>
</feature>
<feature type="turn" evidence="3">
    <location>
        <begin position="323"/>
        <end position="326"/>
    </location>
</feature>
<feature type="helix" evidence="3">
    <location>
        <begin position="327"/>
        <end position="336"/>
    </location>
</feature>
<feature type="helix" evidence="3">
    <location>
        <begin position="340"/>
        <end position="342"/>
    </location>
</feature>
<feature type="helix" evidence="3">
    <location>
        <begin position="343"/>
        <end position="357"/>
    </location>
</feature>
<feature type="turn" evidence="4">
    <location>
        <begin position="363"/>
        <end position="366"/>
    </location>
</feature>
<feature type="strand" evidence="3">
    <location>
        <begin position="367"/>
        <end position="376"/>
    </location>
</feature>
<feature type="turn" evidence="3">
    <location>
        <begin position="377"/>
        <end position="379"/>
    </location>
</feature>
<feature type="strand" evidence="3">
    <location>
        <begin position="380"/>
        <end position="388"/>
    </location>
</feature>
<comment type="function">
    <text>The primary product of this enzyme is 4,2',4',6'-tetrahydroxychalcone (also termed naringenin-chalcone or chalcone) which can under specific conditions spontaneously isomerize into naringenin. Substrate preference is feruloyl-CoA = caffeoyl-CoA &gt;&gt; cinnamoyl-CoA.</text>
</comment>
<comment type="catalytic activity">
    <reaction evidence="1">
        <text>(E)-4-coumaroyl-CoA + 3 malonyl-CoA + 3 H(+) = 2',4,4',6'-tetrahydroxychalcone + 3 CO2 + 4 CoA</text>
        <dbReference type="Rhea" id="RHEA:11128"/>
        <dbReference type="ChEBI" id="CHEBI:15378"/>
        <dbReference type="ChEBI" id="CHEBI:15413"/>
        <dbReference type="ChEBI" id="CHEBI:16526"/>
        <dbReference type="ChEBI" id="CHEBI:57287"/>
        <dbReference type="ChEBI" id="CHEBI:57384"/>
        <dbReference type="ChEBI" id="CHEBI:85008"/>
        <dbReference type="EC" id="2.3.1.74"/>
    </reaction>
</comment>
<comment type="pathway">
    <text>Secondary metabolite biosynthesis; flavonoid biosynthesis.</text>
</comment>
<comment type="induction">
    <text>Strong in response to inoculation with fungi.</text>
</comment>
<comment type="similarity">
    <text evidence="2">Belongs to the thiolase-like superfamily. Chalcone/stilbene synthases family.</text>
</comment>